<accession>P09922</accession>
<proteinExistence type="evidence at protein level"/>
<feature type="chain" id="PRO_0000206593" description="Interferon-induced GTP-binding protein Mx1">
    <location>
        <begin position="1"/>
        <end position="631"/>
    </location>
</feature>
<feature type="domain" description="Dynamin-type G" evidence="5">
    <location>
        <begin position="33"/>
        <end position="306"/>
    </location>
</feature>
<feature type="domain" description="GED" evidence="4">
    <location>
        <begin position="543"/>
        <end position="631"/>
    </location>
</feature>
<feature type="region of interest" description="G1 motif" evidence="5">
    <location>
        <begin position="43"/>
        <end position="50"/>
    </location>
</feature>
<feature type="region of interest" description="G2 motif" evidence="5">
    <location>
        <begin position="68"/>
        <end position="70"/>
    </location>
</feature>
<feature type="region of interest" description="G3 motif" evidence="5">
    <location>
        <begin position="144"/>
        <end position="147"/>
    </location>
</feature>
<feature type="region of interest" description="G4 motif" evidence="5">
    <location>
        <begin position="213"/>
        <end position="216"/>
    </location>
</feature>
<feature type="region of interest" description="G5 motif" evidence="5">
    <location>
        <begin position="245"/>
        <end position="248"/>
    </location>
</feature>
<feature type="region of interest" description="Bundle signaling element (BSE)" evidence="1">
    <location>
        <begin position="307"/>
        <end position="332"/>
    </location>
</feature>
<feature type="region of interest" description="Middle domain" evidence="1">
    <location>
        <begin position="332"/>
        <end position="499"/>
    </location>
</feature>
<feature type="region of interest" description="Stalk" evidence="1">
    <location>
        <begin position="333"/>
        <end position="601"/>
    </location>
</feature>
<feature type="region of interest" description="Critical for lipid-binding" evidence="1">
    <location>
        <begin position="520"/>
        <end position="522"/>
    </location>
</feature>
<feature type="binding site" evidence="3">
    <location>
        <begin position="43"/>
        <end position="50"/>
    </location>
    <ligand>
        <name>GTP</name>
        <dbReference type="ChEBI" id="CHEBI:37565"/>
    </ligand>
</feature>
<feature type="binding site" evidence="3">
    <location>
        <begin position="144"/>
        <end position="148"/>
    </location>
    <ligand>
        <name>GTP</name>
        <dbReference type="ChEBI" id="CHEBI:37565"/>
    </ligand>
</feature>
<feature type="binding site" evidence="3">
    <location>
        <begin position="213"/>
        <end position="216"/>
    </location>
    <ligand>
        <name>GTP</name>
        <dbReference type="ChEBI" id="CHEBI:37565"/>
    </ligand>
</feature>
<feature type="mutagenesis site" description="No effect on viral infection." evidence="13">
    <original>S</original>
    <variation>C</variation>
    <location>
        <position position="47"/>
    </location>
</feature>
<feature type="mutagenesis site" description="Loss of protection against viral infection." evidence="13">
    <original>K</original>
    <variation>A</variation>
    <variation>M</variation>
    <location>
        <position position="49"/>
    </location>
</feature>
<keyword id="KW-0051">Antiviral defense</keyword>
<keyword id="KW-0963">Cytoplasm</keyword>
<keyword id="KW-0256">Endoplasmic reticulum</keyword>
<keyword id="KW-0342">GTP-binding</keyword>
<keyword id="KW-0391">Immunity</keyword>
<keyword id="KW-0399">Innate immunity</keyword>
<keyword id="KW-0472">Membrane</keyword>
<keyword id="KW-0547">Nucleotide-binding</keyword>
<keyword id="KW-0539">Nucleus</keyword>
<keyword id="KW-0832">Ubl conjugation</keyword>
<comment type="function">
    <text evidence="7 9">Interferon-induced dynamin-like GTPase with antiviral activity against influenza A virus, (IAV), influenza B virus (IBV) and Thogoto virus (THOV). Inhibits FLUAV by interfering with the process of primary transcription, probably by affecting the viral polymerase function.</text>
</comment>
<comment type="subunit">
    <text evidence="1 10">Homooligomer. Oligomerizes into multimeric filamentous or ring-like structures by virtue of its stalk domain. Oligomerization is critical for GTPase activity, protein stability, and recognition of viral target structures (By similarity). Interacts with TRPC1, TRPC3, TRPC4, TRPC5, TRPC6 and TRPC7 (By similarity). Interacts with HSPA5 (By similarity). Interacts with TUBB/TUBB5 (By similarity). Interacts with DDX39A and DDX39B.</text>
</comment>
<comment type="subcellular location">
    <subcellularLocation>
        <location evidence="10">Cytoplasm</location>
    </subcellularLocation>
    <subcellularLocation>
        <location evidence="10">Nucleus</location>
    </subcellularLocation>
    <subcellularLocation>
        <location evidence="2">Endoplasmic reticulum membrane</location>
        <topology evidence="2">Peripheral membrane protein</topology>
        <orientation evidence="2">Cytoplasmic side</orientation>
    </subcellularLocation>
    <subcellularLocation>
        <location evidence="2">Cytoplasm</location>
        <location evidence="2">Perinuclear region</location>
    </subcellularLocation>
    <text evidence="2">Binds preferentially to negatively charged phospholipids. Colocalizes with CCHFV protein N in the perinuclear region.</text>
</comment>
<comment type="induction">
    <text evidence="8">By type I and type III interferons.</text>
</comment>
<comment type="domain">
    <text evidence="1">The C-terminal GTPase effector domain (GED) is involved in oligomerization and viral target recognition.</text>
</comment>
<comment type="domain">
    <text evidence="1">The middle domain mediates self-assembly and oligomerization.</text>
</comment>
<comment type="PTM">
    <text evidence="1">ISGylated.</text>
</comment>
<comment type="similarity">
    <text evidence="5">Belongs to the TRAFAC class dynamin-like GTPase superfamily. Dynamin/Fzo/YdjA family.</text>
</comment>
<comment type="caution">
    <text evidence="6 11 12 15">The sequence shown in this entry is that of the functional protein expressed by the A2G strain, which is known for its unique resistance to myxovirus (influenza) infections, or Czech II strain, which derives from wild mice (PubMed:15489334, PubMed:3000619). Some other strains also express fully active Mx1 protein, such as SL/NiA (PubMed:2903437). In some inbred mouse strains however, including the strain of the reference genome C57BL/6J, Mx1 gene contains a deletion or a nonsense mutation that results in a non-functional gene product.</text>
</comment>
<protein>
    <recommendedName>
        <fullName>Interferon-induced GTP-binding protein Mx1</fullName>
    </recommendedName>
    <alternativeName>
        <fullName>Influenza resistance protein</fullName>
    </alternativeName>
    <alternativeName>
        <fullName>Myxoma resistance protein 1</fullName>
    </alternativeName>
    <alternativeName>
        <fullName>Myxovirus resistance protein 1</fullName>
    </alternativeName>
</protein>
<sequence length="631" mass="72038">MDSVNNLCRHYEEKVRPCIDLIDTLRALGVEQDLALPAIAVIGDQSSGKSSVLEALSGVALPRGSGIVTRCPLVLKLRKLKEGEEWRGKVSYDDIEVELSDPSEVEEAINKGQNFIAGVGLGISDKLISLDVSSPNVPDLTLIDLPGITRVAVGNQPADIGRQIKRLIKTYIQKQETINLVVVPSNVDIATTEALSMAQEVDPEGDRTIGVLTKPDLVDRGAEGKVLDVMRNLVYPLKKGYMIVKCRGQQDIQEQLSLTEAFQKEQVFFKDHSYFSILLEDGKATVPCLAERLTEELTSHICKSLPLLEDQINSSHQSASEELQKYGADIPEDDRTRMSFLVNKISAFNRNIMNLIQAQETVSEGDSRLFTKLRNEFLAWDDHIEEYFKKDSPEVQSKMKEFENQYRGRELPGFVDYKAFESIIKKRVKALEESAVNMLRRVTKMVQTAFVKILSNDFGDFLNLCCTAKSKIKEIRLNQEKEAENLIRLHFQMEQIVYCQDQVYKETLKTIREKEAEKEKTKALINPATFQNNSQFPQKGLTTTEMTQHLKAYYQECRRNIGRQIPLIIQYFILKTFGEEIEKMMLQLLQDTSKCSWFLEEQSDTREKKKFLKRRLLRLDEARQKLAKFSD</sequence>
<name>MX1B_MOUSE</name>
<dbReference type="EMBL" id="M12279">
    <property type="protein sequence ID" value="AAA39776.1"/>
    <property type="molecule type" value="mRNA"/>
</dbReference>
<dbReference type="EMBL" id="M21117">
    <property type="protein sequence ID" value="AAA39777.1"/>
    <property type="molecule type" value="Genomic_DNA"/>
</dbReference>
<dbReference type="EMBL" id="M21105">
    <property type="protein sequence ID" value="AAA39777.1"/>
    <property type="status" value="JOINED"/>
    <property type="molecule type" value="Genomic_DNA"/>
</dbReference>
<dbReference type="EMBL" id="M21106">
    <property type="protein sequence ID" value="AAA39777.1"/>
    <property type="status" value="JOINED"/>
    <property type="molecule type" value="Genomic_DNA"/>
</dbReference>
<dbReference type="EMBL" id="M21107">
    <property type="protein sequence ID" value="AAA39777.1"/>
    <property type="status" value="JOINED"/>
    <property type="molecule type" value="Genomic_DNA"/>
</dbReference>
<dbReference type="EMBL" id="M21108">
    <property type="protein sequence ID" value="AAA39777.1"/>
    <property type="status" value="JOINED"/>
    <property type="molecule type" value="Genomic_DNA"/>
</dbReference>
<dbReference type="EMBL" id="M21109">
    <property type="protein sequence ID" value="AAA39777.1"/>
    <property type="status" value="JOINED"/>
    <property type="molecule type" value="Genomic_DNA"/>
</dbReference>
<dbReference type="EMBL" id="M21110">
    <property type="protein sequence ID" value="AAA39777.1"/>
    <property type="status" value="JOINED"/>
    <property type="molecule type" value="Genomic_DNA"/>
</dbReference>
<dbReference type="EMBL" id="M21111">
    <property type="protein sequence ID" value="AAA39777.1"/>
    <property type="status" value="JOINED"/>
    <property type="molecule type" value="Genomic_DNA"/>
</dbReference>
<dbReference type="EMBL" id="M21112">
    <property type="protein sequence ID" value="AAA39777.1"/>
    <property type="status" value="JOINED"/>
    <property type="molecule type" value="Genomic_DNA"/>
</dbReference>
<dbReference type="EMBL" id="M21113">
    <property type="protein sequence ID" value="AAA39777.1"/>
    <property type="status" value="JOINED"/>
    <property type="molecule type" value="Genomic_DNA"/>
</dbReference>
<dbReference type="EMBL" id="M21114">
    <property type="protein sequence ID" value="AAA39777.1"/>
    <property type="status" value="JOINED"/>
    <property type="molecule type" value="Genomic_DNA"/>
</dbReference>
<dbReference type="EMBL" id="M21115">
    <property type="protein sequence ID" value="AAA39777.1"/>
    <property type="status" value="JOINED"/>
    <property type="molecule type" value="Genomic_DNA"/>
</dbReference>
<dbReference type="EMBL" id="M21116">
    <property type="protein sequence ID" value="AAA39777.1"/>
    <property type="status" value="JOINED"/>
    <property type="molecule type" value="Genomic_DNA"/>
</dbReference>
<dbReference type="EMBL" id="BC011113">
    <property type="protein sequence ID" value="AAH11113.1"/>
    <property type="molecule type" value="mRNA"/>
</dbReference>
<dbReference type="PIR" id="A31203">
    <property type="entry name" value="A31203"/>
</dbReference>
<dbReference type="RefSeq" id="NP_034976.1">
    <property type="nucleotide sequence ID" value="NM_010846.1"/>
</dbReference>
<dbReference type="SMR" id="P09922"/>
<dbReference type="IntAct" id="P09922">
    <property type="interactions" value="1"/>
</dbReference>
<dbReference type="MINT" id="P09922"/>
<dbReference type="iPTMnet" id="P09922"/>
<dbReference type="PhosphoSitePlus" id="P09922"/>
<dbReference type="jPOST" id="P09922"/>
<dbReference type="ProteomicsDB" id="293590"/>
<dbReference type="Pumba" id="P09922"/>
<dbReference type="DNASU" id="17857"/>
<dbReference type="GeneID" id="17857"/>
<dbReference type="KEGG" id="mmu:17857"/>
<dbReference type="UCSC" id="uc008adf.1">
    <property type="organism name" value="mouse"/>
</dbReference>
<dbReference type="AGR" id="MGI:97243"/>
<dbReference type="CTD" id="4599"/>
<dbReference type="MGI" id="MGI:97243">
    <property type="gene designation" value="Mx1"/>
</dbReference>
<dbReference type="eggNOG" id="KOG0446">
    <property type="taxonomic scope" value="Eukaryota"/>
</dbReference>
<dbReference type="BioGRID-ORCS" id="17857">
    <property type="hits" value="1 hit in 54 CRISPR screens"/>
</dbReference>
<dbReference type="CD-CODE" id="2E092FC3">
    <property type="entry name" value="PML body"/>
</dbReference>
<dbReference type="CD-CODE" id="E86DA2C3">
    <property type="entry name" value="Nuclear body"/>
</dbReference>
<dbReference type="RNAct" id="P09922">
    <property type="molecule type" value="protein"/>
</dbReference>
<dbReference type="GO" id="GO:0005789">
    <property type="term" value="C:endoplasmic reticulum membrane"/>
    <property type="evidence" value="ECO:0007669"/>
    <property type="project" value="UniProtKB-SubCell"/>
</dbReference>
<dbReference type="GO" id="GO:0005634">
    <property type="term" value="C:nucleus"/>
    <property type="evidence" value="ECO:0000314"/>
    <property type="project" value="UniProtKB"/>
</dbReference>
<dbReference type="GO" id="GO:0048471">
    <property type="term" value="C:perinuclear region of cytoplasm"/>
    <property type="evidence" value="ECO:0007669"/>
    <property type="project" value="UniProtKB-SubCell"/>
</dbReference>
<dbReference type="GO" id="GO:0005525">
    <property type="term" value="F:GTP binding"/>
    <property type="evidence" value="ECO:0000304"/>
    <property type="project" value="MGI"/>
</dbReference>
<dbReference type="GO" id="GO:0003924">
    <property type="term" value="F:GTPase activity"/>
    <property type="evidence" value="ECO:0000304"/>
    <property type="project" value="MGI"/>
</dbReference>
<dbReference type="GO" id="GO:0051607">
    <property type="term" value="P:defense response to virus"/>
    <property type="evidence" value="ECO:0007669"/>
    <property type="project" value="UniProtKB-KW"/>
</dbReference>
<dbReference type="GO" id="GO:0045087">
    <property type="term" value="P:innate immune response"/>
    <property type="evidence" value="ECO:0000314"/>
    <property type="project" value="UniProtKB"/>
</dbReference>
<dbReference type="GO" id="GO:0009615">
    <property type="term" value="P:response to virus"/>
    <property type="evidence" value="ECO:0000315"/>
    <property type="project" value="UniProtKB"/>
</dbReference>
<dbReference type="CDD" id="cd08771">
    <property type="entry name" value="DLP_1"/>
    <property type="match status" value="1"/>
</dbReference>
<dbReference type="FunFam" id="1.20.120.1240:FF:000007">
    <property type="entry name" value="Interferon-induced GTP-binding protein Mx1"/>
    <property type="match status" value="1"/>
</dbReference>
<dbReference type="FunFam" id="3.40.50.300:FF:000621">
    <property type="entry name" value="Interferon-induced GTP-binding protein Mx1"/>
    <property type="match status" value="1"/>
</dbReference>
<dbReference type="Gene3D" id="1.20.120.1240">
    <property type="entry name" value="Dynamin, middle domain"/>
    <property type="match status" value="1"/>
</dbReference>
<dbReference type="Gene3D" id="3.40.50.300">
    <property type="entry name" value="P-loop containing nucleotide triphosphate hydrolases"/>
    <property type="match status" value="1"/>
</dbReference>
<dbReference type="InterPro" id="IPR022812">
    <property type="entry name" value="Dynamin"/>
</dbReference>
<dbReference type="InterPro" id="IPR001401">
    <property type="entry name" value="Dynamin_GTPase"/>
</dbReference>
<dbReference type="InterPro" id="IPR019762">
    <property type="entry name" value="Dynamin_GTPase_CS"/>
</dbReference>
<dbReference type="InterPro" id="IPR045063">
    <property type="entry name" value="Dynamin_N"/>
</dbReference>
<dbReference type="InterPro" id="IPR000375">
    <property type="entry name" value="Dynamin_stalk"/>
</dbReference>
<dbReference type="InterPro" id="IPR030381">
    <property type="entry name" value="G_DYNAMIN_dom"/>
</dbReference>
<dbReference type="InterPro" id="IPR003130">
    <property type="entry name" value="GED"/>
</dbReference>
<dbReference type="InterPro" id="IPR020850">
    <property type="entry name" value="GED_dom"/>
</dbReference>
<dbReference type="InterPro" id="IPR027417">
    <property type="entry name" value="P-loop_NTPase"/>
</dbReference>
<dbReference type="PANTHER" id="PTHR11566">
    <property type="entry name" value="DYNAMIN"/>
    <property type="match status" value="1"/>
</dbReference>
<dbReference type="PANTHER" id="PTHR11566:SF217">
    <property type="entry name" value="INTERFERON-INDUCED GTP-BINDING PROTEIN MX1"/>
    <property type="match status" value="1"/>
</dbReference>
<dbReference type="Pfam" id="PF01031">
    <property type="entry name" value="Dynamin_M"/>
    <property type="match status" value="1"/>
</dbReference>
<dbReference type="Pfam" id="PF00350">
    <property type="entry name" value="Dynamin_N"/>
    <property type="match status" value="1"/>
</dbReference>
<dbReference type="Pfam" id="PF02212">
    <property type="entry name" value="GED"/>
    <property type="match status" value="1"/>
</dbReference>
<dbReference type="PRINTS" id="PR00195">
    <property type="entry name" value="DYNAMIN"/>
</dbReference>
<dbReference type="SMART" id="SM00053">
    <property type="entry name" value="DYNc"/>
    <property type="match status" value="1"/>
</dbReference>
<dbReference type="SMART" id="SM00302">
    <property type="entry name" value="GED"/>
    <property type="match status" value="1"/>
</dbReference>
<dbReference type="SUPFAM" id="SSF52540">
    <property type="entry name" value="P-loop containing nucleoside triphosphate hydrolases"/>
    <property type="match status" value="1"/>
</dbReference>
<dbReference type="PROSITE" id="PS00410">
    <property type="entry name" value="G_DYNAMIN_1"/>
    <property type="match status" value="1"/>
</dbReference>
<dbReference type="PROSITE" id="PS51718">
    <property type="entry name" value="G_DYNAMIN_2"/>
    <property type="match status" value="1"/>
</dbReference>
<dbReference type="PROSITE" id="PS51388">
    <property type="entry name" value="GED"/>
    <property type="match status" value="1"/>
</dbReference>
<reference key="1">
    <citation type="journal article" date="1986" name="Cell">
        <title>Mx protein: constitutive expression in 3T3 cells transformed with cloned Mx cDNA confers selective resistance to influenza virus.</title>
        <authorList>
            <person name="Staeheli P."/>
            <person name="Haller O."/>
            <person name="Boll W."/>
            <person name="Lindenmann J."/>
            <person name="Weissmann C."/>
        </authorList>
    </citation>
    <scope>NUCLEOTIDE SEQUENCE [MRNA]</scope>
</reference>
<reference key="2">
    <citation type="journal article" date="1988" name="Mol. Cell. Biol.">
        <title>Organization of the murine Mx gene and characterization of its interferon- and virus-inducible promoter.</title>
        <authorList>
            <person name="Hug H."/>
            <person name="Costas M."/>
            <person name="Staeheli P."/>
            <person name="Aebi M."/>
            <person name="Weissmann C."/>
        </authorList>
    </citation>
    <scope>NUCLEOTIDE SEQUENCE [GENOMIC DNA]</scope>
</reference>
<reference key="3">
    <citation type="journal article" date="2004" name="Genome Res.">
        <title>The status, quality, and expansion of the NIH full-length cDNA project: the Mammalian Gene Collection (MGC).</title>
        <authorList>
            <consortium name="The MGC Project Team"/>
        </authorList>
    </citation>
    <scope>NUCLEOTIDE SEQUENCE [LARGE SCALE MRNA]</scope>
    <source>
        <strain>Czech II</strain>
        <tissue>Mammary gland</tissue>
    </source>
</reference>
<reference key="4">
    <citation type="journal article" date="1988" name="Mol. Cell. Biol.">
        <title>Influenza virus-susceptible mice carry Mx genes with a large deletion or a nonsense mutation.</title>
        <authorList>
            <person name="Staeheli P."/>
            <person name="Grob R."/>
            <person name="Meier E."/>
            <person name="Sutcliffe J.G."/>
            <person name="Haller O."/>
        </authorList>
    </citation>
    <scope>INTERSTRAIN VARIABILITY IN MX1 GENE SEQUENCE</scope>
</reference>
<reference key="5">
    <citation type="journal article" date="1993" name="J. Virol.">
        <title>A functional GTP-binding motif is necessary for antiviral activity of Mx proteins.</title>
        <authorList>
            <person name="Pitossi F."/>
            <person name="Blank A."/>
            <person name="Schroeder A."/>
            <person name="Schwarz A."/>
            <person name="Huessi P."/>
            <person name="Schwemmle M."/>
            <person name="Pavlovic J."/>
            <person name="Staeheli P."/>
        </authorList>
    </citation>
    <scope>MUTAGENESIS OF SER-47 AND LYS-49</scope>
</reference>
<reference key="6">
    <citation type="journal article" date="2007" name="J. Virol.">
        <title>The Mx1 gene protects mice against the pandemic 1918 and highly lethal human H5N1 influenza viruses.</title>
        <authorList>
            <person name="Tumpey T.M."/>
            <person name="Szretter K.J."/>
            <person name="Van Hoeven N."/>
            <person name="Katz J.M."/>
            <person name="Kochs G."/>
            <person name="Haller O."/>
            <person name="Garcia-Sastre A."/>
            <person name="Staeheli P."/>
        </authorList>
    </citation>
    <scope>FUNCTION IN RESISTANCE TO INFLUENZA VIRUS</scope>
</reference>
<reference key="7">
    <citation type="journal article" date="2007" name="Microbes Infect.">
        <title>The Mx GTPase family of interferon-induced antiviral proteins.</title>
        <authorList>
            <person name="Haller O."/>
            <person name="Stertz S."/>
            <person name="Kochs G."/>
        </authorList>
    </citation>
    <scope>REVIEW</scope>
    <scope>INDUCTION</scope>
</reference>
<reference key="8">
    <citation type="journal article" date="2011" name="J. Biol. Chem.">
        <title>Interferon-induced antiviral protein MxA interacts with the cellular RNA helicases UAP56 and URH49.</title>
        <authorList>
            <person name="Wisskirchen C."/>
            <person name="Ludersdorfer T.H."/>
            <person name="Mueller D.A."/>
            <person name="Moritz E."/>
            <person name="Pavlovic J."/>
        </authorList>
    </citation>
    <scope>SUBCELLULAR LOCATION</scope>
    <scope>INTERACTION WITH DDX39A AND DDX39B</scope>
</reference>
<reference key="9">
    <citation type="journal article" date="2011" name="Vaccine">
        <title>Efficient influenza B virus propagation due to deficient interferon-induced antiviral activity in MDCK cells.</title>
        <authorList>
            <person name="Frensing T."/>
            <person name="Seitz C."/>
            <person name="Heynisch B."/>
            <person name="Patzina C."/>
            <person name="Kochs G."/>
            <person name="Reichl U."/>
        </authorList>
    </citation>
    <scope>FUNCTION</scope>
</reference>
<reference key="10">
    <citation type="journal article" date="2012" name="J. Virol.">
        <title>Molecular signatures associated with Mx1-mediated resistance to highly pathogenic influenza virus infection: mechanisms of survival.</title>
        <authorList>
            <person name="Cilloniz C."/>
            <person name="Pantin-Jackwood M.J."/>
            <person name="Ni C."/>
            <person name="Carter V.S."/>
            <person name="Korth M.J."/>
            <person name="Swayne D.E."/>
            <person name="Tumpey T.M."/>
            <person name="Katze M.G."/>
        </authorList>
    </citation>
    <scope>RESISTANCE TO INFLUENZA VIRUS</scope>
</reference>
<gene>
    <name type="primary">Mx1</name>
    <name evidence="14" type="synonym">Mx</name>
</gene>
<organism>
    <name type="scientific">Mus musculus</name>
    <name type="common">Mouse</name>
    <dbReference type="NCBI Taxonomy" id="10090"/>
    <lineage>
        <taxon>Eukaryota</taxon>
        <taxon>Metazoa</taxon>
        <taxon>Chordata</taxon>
        <taxon>Craniata</taxon>
        <taxon>Vertebrata</taxon>
        <taxon>Euteleostomi</taxon>
        <taxon>Mammalia</taxon>
        <taxon>Eutheria</taxon>
        <taxon>Euarchontoglires</taxon>
        <taxon>Glires</taxon>
        <taxon>Rodentia</taxon>
        <taxon>Myomorpha</taxon>
        <taxon>Muroidea</taxon>
        <taxon>Muridae</taxon>
        <taxon>Murinae</taxon>
        <taxon>Mus</taxon>
        <taxon>Mus</taxon>
    </lineage>
</organism>
<evidence type="ECO:0000250" key="1"/>
<evidence type="ECO:0000250" key="2">
    <source>
        <dbReference type="UniProtKB" id="P20591"/>
    </source>
</evidence>
<evidence type="ECO:0000255" key="3"/>
<evidence type="ECO:0000255" key="4">
    <source>
        <dbReference type="PROSITE-ProRule" id="PRU00720"/>
    </source>
</evidence>
<evidence type="ECO:0000255" key="5">
    <source>
        <dbReference type="PROSITE-ProRule" id="PRU01055"/>
    </source>
</evidence>
<evidence type="ECO:0000269" key="6">
    <source>
    </source>
</evidence>
<evidence type="ECO:0000269" key="7">
    <source>
    </source>
</evidence>
<evidence type="ECO:0000269" key="8">
    <source>
    </source>
</evidence>
<evidence type="ECO:0000269" key="9">
    <source>
    </source>
</evidence>
<evidence type="ECO:0000269" key="10">
    <source>
    </source>
</evidence>
<evidence type="ECO:0000269" key="11">
    <source>
    </source>
</evidence>
<evidence type="ECO:0000269" key="12">
    <source>
    </source>
</evidence>
<evidence type="ECO:0000269" key="13">
    <source>
    </source>
</evidence>
<evidence type="ECO:0000303" key="14">
    <source>
    </source>
</evidence>
<evidence type="ECO:0000305" key="15"/>